<protein>
    <recommendedName>
        <fullName>Cytochrome b</fullName>
    </recommendedName>
    <alternativeName>
        <fullName>Complex III subunit 3</fullName>
    </alternativeName>
    <alternativeName>
        <fullName>Complex III subunit III</fullName>
    </alternativeName>
    <alternativeName>
        <fullName>Cytochrome b-c1 complex subunit 3</fullName>
    </alternativeName>
    <alternativeName>
        <fullName>Ubiquinol-cytochrome-c reductase complex cytochrome b subunit</fullName>
    </alternativeName>
</protein>
<keyword id="KW-0249">Electron transport</keyword>
<keyword id="KW-0349">Heme</keyword>
<keyword id="KW-0408">Iron</keyword>
<keyword id="KW-0472">Membrane</keyword>
<keyword id="KW-0479">Metal-binding</keyword>
<keyword id="KW-0496">Mitochondrion</keyword>
<keyword id="KW-0999">Mitochondrion inner membrane</keyword>
<keyword id="KW-0679">Respiratory chain</keyword>
<keyword id="KW-0812">Transmembrane</keyword>
<keyword id="KW-1133">Transmembrane helix</keyword>
<keyword id="KW-0813">Transport</keyword>
<keyword id="KW-0830">Ubiquinone</keyword>
<accession>Q9MQY6</accession>
<name>CYB_TALEU</name>
<comment type="function">
    <text evidence="2">Component of the ubiquinol-cytochrome c reductase complex (complex III or cytochrome b-c1 complex) that is part of the mitochondrial respiratory chain. The b-c1 complex mediates electron transfer from ubiquinol to cytochrome c. Contributes to the generation of a proton gradient across the mitochondrial membrane that is then used for ATP synthesis.</text>
</comment>
<comment type="cofactor">
    <cofactor evidence="2">
        <name>heme b</name>
        <dbReference type="ChEBI" id="CHEBI:60344"/>
    </cofactor>
    <text evidence="2">Binds 2 heme b groups non-covalently.</text>
</comment>
<comment type="subunit">
    <text evidence="2">The cytochrome bc1 complex contains 11 subunits: 3 respiratory subunits (MT-CYB, CYC1 and UQCRFS1), 2 core proteins (UQCRC1 and UQCRC2) and 6 low-molecular weight proteins (UQCRH/QCR6, UQCRB/QCR7, UQCRQ/QCR8, UQCR10/QCR9, UQCR11/QCR10 and a cleavage product of UQCRFS1). This cytochrome bc1 complex then forms a dimer.</text>
</comment>
<comment type="subcellular location">
    <subcellularLocation>
        <location evidence="2">Mitochondrion inner membrane</location>
        <topology evidence="2">Multi-pass membrane protein</topology>
    </subcellularLocation>
</comment>
<comment type="miscellaneous">
    <text evidence="1">Heme 1 (or BL or b562) is low-potential and absorbs at about 562 nm, and heme 2 (or BH or b566) is high-potential and absorbs at about 566 nm.</text>
</comment>
<comment type="similarity">
    <text evidence="3 4">Belongs to the cytochrome b family.</text>
</comment>
<comment type="caution">
    <text evidence="2">The full-length protein contains only eight transmembrane helices, not nine as predicted by bioinformatics tools.</text>
</comment>
<organism>
    <name type="scientific">Talpa europaea</name>
    <name type="common">European mole</name>
    <dbReference type="NCBI Taxonomy" id="9375"/>
    <lineage>
        <taxon>Eukaryota</taxon>
        <taxon>Metazoa</taxon>
        <taxon>Chordata</taxon>
        <taxon>Craniata</taxon>
        <taxon>Vertebrata</taxon>
        <taxon>Euteleostomi</taxon>
        <taxon>Mammalia</taxon>
        <taxon>Eutheria</taxon>
        <taxon>Laurasiatheria</taxon>
        <taxon>Eulipotyphla</taxon>
        <taxon>Talpidae</taxon>
        <taxon>Talpa</taxon>
    </lineage>
</organism>
<gene>
    <name type="primary">MT-CYB</name>
    <name type="synonym">COB</name>
    <name type="synonym">CYTB</name>
    <name type="synonym">MTCYB</name>
</gene>
<evidence type="ECO:0000250" key="1"/>
<evidence type="ECO:0000250" key="2">
    <source>
        <dbReference type="UniProtKB" id="P00157"/>
    </source>
</evidence>
<evidence type="ECO:0000255" key="3">
    <source>
        <dbReference type="PROSITE-ProRule" id="PRU00967"/>
    </source>
</evidence>
<evidence type="ECO:0000255" key="4">
    <source>
        <dbReference type="PROSITE-ProRule" id="PRU00968"/>
    </source>
</evidence>
<reference key="1">
    <citation type="journal article" date="2000" name="Genes Genet. Syst.">
        <title>Molecular phylogeny of East Asian moles inferred from the sequence variation of the mitochondrial cytochrome b gene.</title>
        <authorList>
            <person name="Tsuchiya K."/>
            <person name="Suzuki H."/>
            <person name="Shinohara A."/>
            <person name="Harada M."/>
            <person name="Wakana S."/>
            <person name="Sakaizumi M."/>
            <person name="Han S.H."/>
            <person name="Lin L.K."/>
            <person name="Kryukov A.P."/>
        </authorList>
    </citation>
    <scope>NUCLEOTIDE SEQUENCE [GENOMIC DNA]</scope>
    <source>
        <strain>Isolate HS564</strain>
    </source>
</reference>
<geneLocation type="mitochondrion"/>
<sequence>MTNIRKTHPLMKIVNSSFIDLPAPSNISSWWNFGSLLGICLILQILTGLFLAMHYTSDTMTAFSSVTHICRDVNYGWLIRYLHANGASMFFICLFLHVGRGLYYGSYMFMETWNIGVLLLFAVMATAFMGYVLPWGQMSFWGATVITNLLSAIPYIGTDLVEWIWGGFSVDKATLTRFFAFHFILPFIIAALAGVHLLFLHETGSNNPSGLSSDTDKIPFHPYYTIKDILGALILIMALSSLVLFSPDLLGDPDNYIPANPLNTPPHIKPEWYFLFAYAILRSIPNKLGGVLALVFSILVLALMPFLHTSKQRSMMFRPISQCLFWLLVADLFTLTWIGGQPVEHPFIIIGQLASILYFALILMLMPLASLMENNLLKW</sequence>
<feature type="chain" id="PRO_0000061636" description="Cytochrome b">
    <location>
        <begin position="1"/>
        <end position="379"/>
    </location>
</feature>
<feature type="transmembrane region" description="Helical" evidence="2">
    <location>
        <begin position="33"/>
        <end position="53"/>
    </location>
</feature>
<feature type="transmembrane region" description="Helical" evidence="2">
    <location>
        <begin position="77"/>
        <end position="98"/>
    </location>
</feature>
<feature type="transmembrane region" description="Helical" evidence="2">
    <location>
        <begin position="113"/>
        <end position="133"/>
    </location>
</feature>
<feature type="transmembrane region" description="Helical" evidence="2">
    <location>
        <begin position="178"/>
        <end position="198"/>
    </location>
</feature>
<feature type="transmembrane region" description="Helical" evidence="2">
    <location>
        <begin position="226"/>
        <end position="246"/>
    </location>
</feature>
<feature type="transmembrane region" description="Helical" evidence="2">
    <location>
        <begin position="288"/>
        <end position="308"/>
    </location>
</feature>
<feature type="transmembrane region" description="Helical" evidence="2">
    <location>
        <begin position="320"/>
        <end position="340"/>
    </location>
</feature>
<feature type="transmembrane region" description="Helical" evidence="2">
    <location>
        <begin position="347"/>
        <end position="367"/>
    </location>
</feature>
<feature type="binding site" description="axial binding residue" evidence="2">
    <location>
        <position position="83"/>
    </location>
    <ligand>
        <name>heme b</name>
        <dbReference type="ChEBI" id="CHEBI:60344"/>
        <label>b562</label>
    </ligand>
    <ligandPart>
        <name>Fe</name>
        <dbReference type="ChEBI" id="CHEBI:18248"/>
    </ligandPart>
</feature>
<feature type="binding site" description="axial binding residue" evidence="2">
    <location>
        <position position="97"/>
    </location>
    <ligand>
        <name>heme b</name>
        <dbReference type="ChEBI" id="CHEBI:60344"/>
        <label>b566</label>
    </ligand>
    <ligandPart>
        <name>Fe</name>
        <dbReference type="ChEBI" id="CHEBI:18248"/>
    </ligandPart>
</feature>
<feature type="binding site" description="axial binding residue" evidence="2">
    <location>
        <position position="182"/>
    </location>
    <ligand>
        <name>heme b</name>
        <dbReference type="ChEBI" id="CHEBI:60344"/>
        <label>b562</label>
    </ligand>
    <ligandPart>
        <name>Fe</name>
        <dbReference type="ChEBI" id="CHEBI:18248"/>
    </ligandPart>
</feature>
<feature type="binding site" description="axial binding residue" evidence="2">
    <location>
        <position position="196"/>
    </location>
    <ligand>
        <name>heme b</name>
        <dbReference type="ChEBI" id="CHEBI:60344"/>
        <label>b566</label>
    </ligand>
    <ligandPart>
        <name>Fe</name>
        <dbReference type="ChEBI" id="CHEBI:18248"/>
    </ligandPart>
</feature>
<feature type="binding site" evidence="2">
    <location>
        <position position="201"/>
    </location>
    <ligand>
        <name>a ubiquinone</name>
        <dbReference type="ChEBI" id="CHEBI:16389"/>
    </ligand>
</feature>
<dbReference type="EMBL" id="AB037601">
    <property type="protein sequence ID" value="BAA90560.1"/>
    <property type="molecule type" value="Genomic_DNA"/>
</dbReference>
<dbReference type="SMR" id="Q9MQY6"/>
<dbReference type="GO" id="GO:0005743">
    <property type="term" value="C:mitochondrial inner membrane"/>
    <property type="evidence" value="ECO:0007669"/>
    <property type="project" value="UniProtKB-SubCell"/>
</dbReference>
<dbReference type="GO" id="GO:0045275">
    <property type="term" value="C:respiratory chain complex III"/>
    <property type="evidence" value="ECO:0007669"/>
    <property type="project" value="InterPro"/>
</dbReference>
<dbReference type="GO" id="GO:0046872">
    <property type="term" value="F:metal ion binding"/>
    <property type="evidence" value="ECO:0007669"/>
    <property type="project" value="UniProtKB-KW"/>
</dbReference>
<dbReference type="GO" id="GO:0008121">
    <property type="term" value="F:ubiquinol-cytochrome-c reductase activity"/>
    <property type="evidence" value="ECO:0007669"/>
    <property type="project" value="InterPro"/>
</dbReference>
<dbReference type="GO" id="GO:0006122">
    <property type="term" value="P:mitochondrial electron transport, ubiquinol to cytochrome c"/>
    <property type="evidence" value="ECO:0007669"/>
    <property type="project" value="TreeGrafter"/>
</dbReference>
<dbReference type="CDD" id="cd00290">
    <property type="entry name" value="cytochrome_b_C"/>
    <property type="match status" value="1"/>
</dbReference>
<dbReference type="CDD" id="cd00284">
    <property type="entry name" value="Cytochrome_b_N"/>
    <property type="match status" value="1"/>
</dbReference>
<dbReference type="FunFam" id="1.20.810.10:FF:000002">
    <property type="entry name" value="Cytochrome b"/>
    <property type="match status" value="1"/>
</dbReference>
<dbReference type="Gene3D" id="1.20.810.10">
    <property type="entry name" value="Cytochrome Bc1 Complex, Chain C"/>
    <property type="match status" value="1"/>
</dbReference>
<dbReference type="InterPro" id="IPR005798">
    <property type="entry name" value="Cyt_b/b6_C"/>
</dbReference>
<dbReference type="InterPro" id="IPR036150">
    <property type="entry name" value="Cyt_b/b6_C_sf"/>
</dbReference>
<dbReference type="InterPro" id="IPR005797">
    <property type="entry name" value="Cyt_b/b6_N"/>
</dbReference>
<dbReference type="InterPro" id="IPR027387">
    <property type="entry name" value="Cytb/b6-like_sf"/>
</dbReference>
<dbReference type="InterPro" id="IPR030689">
    <property type="entry name" value="Cytochrome_b"/>
</dbReference>
<dbReference type="InterPro" id="IPR048260">
    <property type="entry name" value="Cytochrome_b_C_euk/bac"/>
</dbReference>
<dbReference type="InterPro" id="IPR048259">
    <property type="entry name" value="Cytochrome_b_N_euk/bac"/>
</dbReference>
<dbReference type="InterPro" id="IPR016174">
    <property type="entry name" value="Di-haem_cyt_TM"/>
</dbReference>
<dbReference type="PANTHER" id="PTHR19271">
    <property type="entry name" value="CYTOCHROME B"/>
    <property type="match status" value="1"/>
</dbReference>
<dbReference type="PANTHER" id="PTHR19271:SF16">
    <property type="entry name" value="CYTOCHROME B"/>
    <property type="match status" value="1"/>
</dbReference>
<dbReference type="Pfam" id="PF00032">
    <property type="entry name" value="Cytochrom_B_C"/>
    <property type="match status" value="1"/>
</dbReference>
<dbReference type="Pfam" id="PF00033">
    <property type="entry name" value="Cytochrome_B"/>
    <property type="match status" value="1"/>
</dbReference>
<dbReference type="PIRSF" id="PIRSF038885">
    <property type="entry name" value="COB"/>
    <property type="match status" value="1"/>
</dbReference>
<dbReference type="SUPFAM" id="SSF81648">
    <property type="entry name" value="a domain/subunit of cytochrome bc1 complex (Ubiquinol-cytochrome c reductase)"/>
    <property type="match status" value="1"/>
</dbReference>
<dbReference type="SUPFAM" id="SSF81342">
    <property type="entry name" value="Transmembrane di-heme cytochromes"/>
    <property type="match status" value="1"/>
</dbReference>
<dbReference type="PROSITE" id="PS51003">
    <property type="entry name" value="CYTB_CTER"/>
    <property type="match status" value="1"/>
</dbReference>
<dbReference type="PROSITE" id="PS51002">
    <property type="entry name" value="CYTB_NTER"/>
    <property type="match status" value="1"/>
</dbReference>
<proteinExistence type="inferred from homology"/>